<dbReference type="EMBL" id="CP000605">
    <property type="protein sequence ID" value="ACD99163.1"/>
    <property type="molecule type" value="Genomic_DNA"/>
</dbReference>
<dbReference type="RefSeq" id="WP_007053803.1">
    <property type="nucleotide sequence ID" value="NZ_AABM02000025.1"/>
</dbReference>
<dbReference type="SMR" id="B3DQC5"/>
<dbReference type="GeneID" id="69578886"/>
<dbReference type="KEGG" id="blj:BLD_1718"/>
<dbReference type="HOGENOM" id="CLU_093315_2_0_11"/>
<dbReference type="Proteomes" id="UP000002419">
    <property type="component" value="Chromosome"/>
</dbReference>
<dbReference type="GO" id="GO:1990904">
    <property type="term" value="C:ribonucleoprotein complex"/>
    <property type="evidence" value="ECO:0007669"/>
    <property type="project" value="UniProtKB-KW"/>
</dbReference>
<dbReference type="GO" id="GO:0005840">
    <property type="term" value="C:ribosome"/>
    <property type="evidence" value="ECO:0007669"/>
    <property type="project" value="UniProtKB-KW"/>
</dbReference>
<dbReference type="GO" id="GO:0019843">
    <property type="term" value="F:rRNA binding"/>
    <property type="evidence" value="ECO:0007669"/>
    <property type="project" value="UniProtKB-UniRule"/>
</dbReference>
<dbReference type="GO" id="GO:0003735">
    <property type="term" value="F:structural constituent of ribosome"/>
    <property type="evidence" value="ECO:0007669"/>
    <property type="project" value="InterPro"/>
</dbReference>
<dbReference type="GO" id="GO:0006412">
    <property type="term" value="P:translation"/>
    <property type="evidence" value="ECO:0007669"/>
    <property type="project" value="UniProtKB-UniRule"/>
</dbReference>
<dbReference type="CDD" id="cd06089">
    <property type="entry name" value="KOW_RPL26"/>
    <property type="match status" value="1"/>
</dbReference>
<dbReference type="Gene3D" id="2.30.30.30">
    <property type="match status" value="1"/>
</dbReference>
<dbReference type="HAMAP" id="MF_01326_B">
    <property type="entry name" value="Ribosomal_uL24_B"/>
    <property type="match status" value="1"/>
</dbReference>
<dbReference type="InterPro" id="IPR005824">
    <property type="entry name" value="KOW"/>
</dbReference>
<dbReference type="InterPro" id="IPR014722">
    <property type="entry name" value="Rib_uL2_dom2"/>
</dbReference>
<dbReference type="InterPro" id="IPR003256">
    <property type="entry name" value="Ribosomal_uL24"/>
</dbReference>
<dbReference type="InterPro" id="IPR005825">
    <property type="entry name" value="Ribosomal_uL24_CS"/>
</dbReference>
<dbReference type="InterPro" id="IPR041988">
    <property type="entry name" value="Ribosomal_uL24_KOW"/>
</dbReference>
<dbReference type="InterPro" id="IPR008991">
    <property type="entry name" value="Translation_prot_SH3-like_sf"/>
</dbReference>
<dbReference type="NCBIfam" id="TIGR01079">
    <property type="entry name" value="rplX_bact"/>
    <property type="match status" value="1"/>
</dbReference>
<dbReference type="PANTHER" id="PTHR12903">
    <property type="entry name" value="MITOCHONDRIAL RIBOSOMAL PROTEIN L24"/>
    <property type="match status" value="1"/>
</dbReference>
<dbReference type="Pfam" id="PF00467">
    <property type="entry name" value="KOW"/>
    <property type="match status" value="1"/>
</dbReference>
<dbReference type="Pfam" id="PF17136">
    <property type="entry name" value="ribosomal_L24"/>
    <property type="match status" value="1"/>
</dbReference>
<dbReference type="SMART" id="SM00739">
    <property type="entry name" value="KOW"/>
    <property type="match status" value="1"/>
</dbReference>
<dbReference type="SUPFAM" id="SSF50104">
    <property type="entry name" value="Translation proteins SH3-like domain"/>
    <property type="match status" value="1"/>
</dbReference>
<dbReference type="PROSITE" id="PS01108">
    <property type="entry name" value="RIBOSOMAL_L24"/>
    <property type="match status" value="1"/>
</dbReference>
<evidence type="ECO:0000255" key="1">
    <source>
        <dbReference type="HAMAP-Rule" id="MF_01326"/>
    </source>
</evidence>
<evidence type="ECO:0000305" key="2"/>
<reference key="1">
    <citation type="journal article" date="2008" name="BMC Genomics">
        <title>Comparative genomic analysis of the gut bacterium Bifidobacterium longum reveals loci susceptible to deletion during pure culture growth.</title>
        <authorList>
            <person name="Lee J.H."/>
            <person name="Karamychev V.N."/>
            <person name="Kozyavkin S.A."/>
            <person name="Mills D."/>
            <person name="Pavlov A.R."/>
            <person name="Pavlova N.V."/>
            <person name="Polouchine N.N."/>
            <person name="Richardson P.M."/>
            <person name="Shakhova V.V."/>
            <person name="Slesarev A.I."/>
            <person name="Weimer B."/>
            <person name="O'Sullivan D.J."/>
        </authorList>
    </citation>
    <scope>NUCLEOTIDE SEQUENCE [LARGE SCALE GENOMIC DNA]</scope>
    <source>
        <strain>DJO10A</strain>
    </source>
</reference>
<feature type="chain" id="PRO_1000141966" description="Large ribosomal subunit protein uL24">
    <location>
        <begin position="1"/>
        <end position="111"/>
    </location>
</feature>
<keyword id="KW-0687">Ribonucleoprotein</keyword>
<keyword id="KW-0689">Ribosomal protein</keyword>
<keyword id="KW-0694">RNA-binding</keyword>
<keyword id="KW-0699">rRNA-binding</keyword>
<sequence>MAAKIKSGDLVKVIRGKDRGKEGTVKQVLSNDRLIVEGVQIVKKHVRATQQGQQAGIVSTEAPIHRSNVMVIDPETKQPTRVGITVKEEARDGKVKTVRVRVAKKSGKELA</sequence>
<proteinExistence type="inferred from homology"/>
<accession>B3DQC5</accession>
<protein>
    <recommendedName>
        <fullName evidence="1">Large ribosomal subunit protein uL24</fullName>
    </recommendedName>
    <alternativeName>
        <fullName evidence="2">50S ribosomal protein L24</fullName>
    </alternativeName>
</protein>
<organism>
    <name type="scientific">Bifidobacterium longum (strain DJO10A)</name>
    <dbReference type="NCBI Taxonomy" id="205913"/>
    <lineage>
        <taxon>Bacteria</taxon>
        <taxon>Bacillati</taxon>
        <taxon>Actinomycetota</taxon>
        <taxon>Actinomycetes</taxon>
        <taxon>Bifidobacteriales</taxon>
        <taxon>Bifidobacteriaceae</taxon>
        <taxon>Bifidobacterium</taxon>
    </lineage>
</organism>
<gene>
    <name evidence="1" type="primary">rplX</name>
    <name type="ordered locus">BLD_1718</name>
</gene>
<comment type="function">
    <text evidence="1">One of two assembly initiator proteins, it binds directly to the 5'-end of the 23S rRNA, where it nucleates assembly of the 50S subunit.</text>
</comment>
<comment type="function">
    <text evidence="1">One of the proteins that surrounds the polypeptide exit tunnel on the outside of the subunit.</text>
</comment>
<comment type="subunit">
    <text evidence="1">Part of the 50S ribosomal subunit.</text>
</comment>
<comment type="similarity">
    <text evidence="1">Belongs to the universal ribosomal protein uL24 family.</text>
</comment>
<name>RL24_BIFLD</name>